<dbReference type="EMBL" id="BA000033">
    <property type="protein sequence ID" value="BAB94722.1"/>
    <property type="molecule type" value="Genomic_DNA"/>
</dbReference>
<dbReference type="RefSeq" id="WP_000353966.1">
    <property type="nucleotide sequence ID" value="NC_003923.1"/>
</dbReference>
<dbReference type="SMR" id="Q8NXE7"/>
<dbReference type="KEGG" id="sam:MW0857"/>
<dbReference type="HOGENOM" id="CLU_005070_4_0_9"/>
<dbReference type="GO" id="GO:0005737">
    <property type="term" value="C:cytoplasm"/>
    <property type="evidence" value="ECO:0007669"/>
    <property type="project" value="UniProtKB-SubCell"/>
</dbReference>
<dbReference type="GO" id="GO:0005524">
    <property type="term" value="F:ATP binding"/>
    <property type="evidence" value="ECO:0007669"/>
    <property type="project" value="UniProtKB-KW"/>
</dbReference>
<dbReference type="GO" id="GO:0016887">
    <property type="term" value="F:ATP hydrolysis activity"/>
    <property type="evidence" value="ECO:0007669"/>
    <property type="project" value="InterPro"/>
</dbReference>
<dbReference type="GO" id="GO:0034605">
    <property type="term" value="P:cellular response to heat"/>
    <property type="evidence" value="ECO:0007669"/>
    <property type="project" value="TreeGrafter"/>
</dbReference>
<dbReference type="GO" id="GO:0042026">
    <property type="term" value="P:protein refolding"/>
    <property type="evidence" value="ECO:0007669"/>
    <property type="project" value="InterPro"/>
</dbReference>
<dbReference type="CDD" id="cd00009">
    <property type="entry name" value="AAA"/>
    <property type="match status" value="1"/>
</dbReference>
<dbReference type="CDD" id="cd19499">
    <property type="entry name" value="RecA-like_ClpB_Hsp104-like"/>
    <property type="match status" value="1"/>
</dbReference>
<dbReference type="FunFam" id="3.40.50.300:FF:000120">
    <property type="entry name" value="ATP-dependent chaperone ClpB"/>
    <property type="match status" value="1"/>
</dbReference>
<dbReference type="FunFam" id="3.40.50.300:FF:000025">
    <property type="entry name" value="ATP-dependent Clp protease subunit"/>
    <property type="match status" value="1"/>
</dbReference>
<dbReference type="FunFam" id="3.40.50.300:FF:000010">
    <property type="entry name" value="Chaperone clpB 1, putative"/>
    <property type="match status" value="1"/>
</dbReference>
<dbReference type="Gene3D" id="1.10.8.60">
    <property type="match status" value="1"/>
</dbReference>
<dbReference type="Gene3D" id="1.10.1780.10">
    <property type="entry name" value="Clp, N-terminal domain"/>
    <property type="match status" value="1"/>
</dbReference>
<dbReference type="Gene3D" id="3.40.50.300">
    <property type="entry name" value="P-loop containing nucleotide triphosphate hydrolases"/>
    <property type="match status" value="3"/>
</dbReference>
<dbReference type="InterPro" id="IPR003593">
    <property type="entry name" value="AAA+_ATPase"/>
</dbReference>
<dbReference type="InterPro" id="IPR003959">
    <property type="entry name" value="ATPase_AAA_core"/>
</dbReference>
<dbReference type="InterPro" id="IPR017730">
    <property type="entry name" value="Chaperonin_ClpB"/>
</dbReference>
<dbReference type="InterPro" id="IPR019489">
    <property type="entry name" value="Clp_ATPase_C"/>
</dbReference>
<dbReference type="InterPro" id="IPR036628">
    <property type="entry name" value="Clp_N_dom_sf"/>
</dbReference>
<dbReference type="InterPro" id="IPR004176">
    <property type="entry name" value="Clp_R_dom"/>
</dbReference>
<dbReference type="InterPro" id="IPR001270">
    <property type="entry name" value="ClpA/B"/>
</dbReference>
<dbReference type="InterPro" id="IPR018368">
    <property type="entry name" value="ClpA/B_CS1"/>
</dbReference>
<dbReference type="InterPro" id="IPR028299">
    <property type="entry name" value="ClpA/B_CS2"/>
</dbReference>
<dbReference type="InterPro" id="IPR041546">
    <property type="entry name" value="ClpA/ClpB_AAA_lid"/>
</dbReference>
<dbReference type="InterPro" id="IPR050130">
    <property type="entry name" value="ClpA_ClpB"/>
</dbReference>
<dbReference type="InterPro" id="IPR027417">
    <property type="entry name" value="P-loop_NTPase"/>
</dbReference>
<dbReference type="NCBIfam" id="TIGR03346">
    <property type="entry name" value="chaperone_ClpB"/>
    <property type="match status" value="1"/>
</dbReference>
<dbReference type="PANTHER" id="PTHR11638">
    <property type="entry name" value="ATP-DEPENDENT CLP PROTEASE"/>
    <property type="match status" value="1"/>
</dbReference>
<dbReference type="PANTHER" id="PTHR11638:SF18">
    <property type="entry name" value="HEAT SHOCK PROTEIN 104"/>
    <property type="match status" value="1"/>
</dbReference>
<dbReference type="Pfam" id="PF00004">
    <property type="entry name" value="AAA"/>
    <property type="match status" value="1"/>
</dbReference>
<dbReference type="Pfam" id="PF07724">
    <property type="entry name" value="AAA_2"/>
    <property type="match status" value="1"/>
</dbReference>
<dbReference type="Pfam" id="PF17871">
    <property type="entry name" value="AAA_lid_9"/>
    <property type="match status" value="1"/>
</dbReference>
<dbReference type="Pfam" id="PF02861">
    <property type="entry name" value="Clp_N"/>
    <property type="match status" value="2"/>
</dbReference>
<dbReference type="Pfam" id="PF10431">
    <property type="entry name" value="ClpB_D2-small"/>
    <property type="match status" value="1"/>
</dbReference>
<dbReference type="PRINTS" id="PR00300">
    <property type="entry name" value="CLPPROTEASEA"/>
</dbReference>
<dbReference type="SMART" id="SM00382">
    <property type="entry name" value="AAA"/>
    <property type="match status" value="2"/>
</dbReference>
<dbReference type="SMART" id="SM01086">
    <property type="entry name" value="ClpB_D2-small"/>
    <property type="match status" value="1"/>
</dbReference>
<dbReference type="SUPFAM" id="SSF81923">
    <property type="entry name" value="Double Clp-N motif"/>
    <property type="match status" value="1"/>
</dbReference>
<dbReference type="SUPFAM" id="SSF52540">
    <property type="entry name" value="P-loop containing nucleoside triphosphate hydrolases"/>
    <property type="match status" value="2"/>
</dbReference>
<dbReference type="PROSITE" id="PS51903">
    <property type="entry name" value="CLP_R"/>
    <property type="match status" value="1"/>
</dbReference>
<dbReference type="PROSITE" id="PS00870">
    <property type="entry name" value="CLPAB_1"/>
    <property type="match status" value="1"/>
</dbReference>
<dbReference type="PROSITE" id="PS00871">
    <property type="entry name" value="CLPAB_2"/>
    <property type="match status" value="1"/>
</dbReference>
<protein>
    <recommendedName>
        <fullName>Chaperone protein ClpB</fullName>
    </recommendedName>
</protein>
<organism>
    <name type="scientific">Staphylococcus aureus (strain MW2)</name>
    <dbReference type="NCBI Taxonomy" id="196620"/>
    <lineage>
        <taxon>Bacteria</taxon>
        <taxon>Bacillati</taxon>
        <taxon>Bacillota</taxon>
        <taxon>Bacilli</taxon>
        <taxon>Bacillales</taxon>
        <taxon>Staphylococcaceae</taxon>
        <taxon>Staphylococcus</taxon>
    </lineage>
</organism>
<evidence type="ECO:0000250" key="1"/>
<evidence type="ECO:0000255" key="2">
    <source>
        <dbReference type="PROSITE-ProRule" id="PRU01251"/>
    </source>
</evidence>
<evidence type="ECO:0000305" key="3"/>
<comment type="function">
    <text evidence="1">Part of a stress-induced multi-chaperone system, it is involved in the recovery of the cell from heat-induced damage, in cooperation with DnaK, DnaJ and GrpE. Acts before DnaK, in the processing of protein aggregates. Protein binding stimulates the ATPase activity; ATP hydrolysis unfolds the denatured protein aggregates, which probably helps expose new hydrophobic binding sites on the surface of ClpB-bound aggregates, contributing to the solubilization and refolding of denatured protein aggregates by DnaK (By similarity).</text>
</comment>
<comment type="subunit">
    <text evidence="1">Homohexamer. The oligomerization is ATP-dependent (By similarity).</text>
</comment>
<comment type="subcellular location">
    <subcellularLocation>
        <location evidence="3">Cytoplasm</location>
    </subcellularLocation>
</comment>
<comment type="domain">
    <text evidence="1">The Clp repeat (R) domain probably functions as a substrate-discriminating domain, recruiting aggregated proteins to the ClpB hexamer and/or stabilizing bound proteins. The NBD2 domain is responsible for oligomerization, whereas the NBD1 domain stabilizes the hexamer probably in an ATP-dependent manner. The movement of the coiled-coil domain is essential for ClpB ability to rescue proteins from an aggregated state, probably by pulling apart large aggregated proteins, which are bound between the coiled-coils motifs of adjacent ClpB subunits in the functional hexamer (By similarity).</text>
</comment>
<comment type="similarity">
    <text evidence="3">Belongs to the ClpA/ClpB family.</text>
</comment>
<reference key="1">
    <citation type="journal article" date="2002" name="Lancet">
        <title>Genome and virulence determinants of high virulence community-acquired MRSA.</title>
        <authorList>
            <person name="Baba T."/>
            <person name="Takeuchi F."/>
            <person name="Kuroda M."/>
            <person name="Yuzawa H."/>
            <person name="Aoki K."/>
            <person name="Oguchi A."/>
            <person name="Nagai Y."/>
            <person name="Iwama N."/>
            <person name="Asano K."/>
            <person name="Naimi T."/>
            <person name="Kuroda H."/>
            <person name="Cui L."/>
            <person name="Yamamoto K."/>
            <person name="Hiramatsu K."/>
        </authorList>
    </citation>
    <scope>NUCLEOTIDE SEQUENCE [LARGE SCALE GENOMIC DNA]</scope>
    <source>
        <strain>MW2</strain>
    </source>
</reference>
<accession>Q8NXE7</accession>
<keyword id="KW-0067">ATP-binding</keyword>
<keyword id="KW-0143">Chaperone</keyword>
<keyword id="KW-0175">Coiled coil</keyword>
<keyword id="KW-0963">Cytoplasm</keyword>
<keyword id="KW-0547">Nucleotide-binding</keyword>
<keyword id="KW-0677">Repeat</keyword>
<keyword id="KW-0346">Stress response</keyword>
<proteinExistence type="inferred from homology"/>
<feature type="chain" id="PRO_0000191180" description="Chaperone protein ClpB">
    <location>
        <begin position="1"/>
        <end position="869"/>
    </location>
</feature>
<feature type="domain" description="Clp R" evidence="2">
    <location>
        <begin position="3"/>
        <end position="145"/>
    </location>
</feature>
<feature type="region of interest" description="Repeat 1" evidence="2">
    <location>
        <begin position="6"/>
        <end position="71"/>
    </location>
</feature>
<feature type="region of interest" description="Repeat 2" evidence="2">
    <location>
        <begin position="85"/>
        <end position="145"/>
    </location>
</feature>
<feature type="region of interest" description="NBD1" evidence="1">
    <location>
        <begin position="158"/>
        <end position="339"/>
    </location>
</feature>
<feature type="region of interest" description="Linker" evidence="1">
    <location>
        <begin position="340"/>
        <end position="549"/>
    </location>
</feature>
<feature type="region of interest" description="NBD2" evidence="1">
    <location>
        <begin position="559"/>
        <end position="771"/>
    </location>
</feature>
<feature type="region of interest" description="C-terminal" evidence="1">
    <location>
        <begin position="772"/>
        <end position="869"/>
    </location>
</feature>
<feature type="coiled-coil region" evidence="1">
    <location>
        <begin position="390"/>
        <end position="524"/>
    </location>
</feature>
<feature type="binding site" evidence="1">
    <location>
        <begin position="205"/>
        <end position="212"/>
    </location>
    <ligand>
        <name>ATP</name>
        <dbReference type="ChEBI" id="CHEBI:30616"/>
        <label>1</label>
    </ligand>
</feature>
<feature type="binding site" evidence="1">
    <location>
        <begin position="609"/>
        <end position="616"/>
    </location>
    <ligand>
        <name>ATP</name>
        <dbReference type="ChEBI" id="CHEBI:30616"/>
        <label>2</label>
    </ligand>
</feature>
<gene>
    <name type="primary">clpB</name>
    <name type="ordered locus">MW0857</name>
</gene>
<name>CLPB_STAAW</name>
<sequence>MDINKMTYAVQSALQQAVELSQQHKLQNIEIEAILSAALNESESLYKSILERANIEVDQLNKAYEDKLNTYASVEGDNIQYGQYISQQANQLITKAESYMKEYEDEYISMEHILRSAMDIDQTTKHYINNKVEVIKEIIKKVRGGNHVTSQNPEVNYKALAKYGRDLVEEVRQGKMDPVIGRDEEIRNTIRILSRKTKNNPVLIGEPGVGKTAIVEGLAQRIVKKDVPESLLDKTVFELDLSALVAGAKYRGEFEERLKAVLKEVKESDGRIILFIDEIHMLVGAGKTDGAMDAGNMLKPMLARGELHCIGATTLNEYREYIEKDSALERRFQKVAVSEPDVEDTISILRGLKERYEVYHGVRIQDRALVAAAELSDRYITDRFLPDKAIDLVDQACATIRTEMGSNPTELDQVNRRVMQLEIEESALKNESDNASKQRLQELQEELANEKEKQAALQSRVESEKEKIANLQEKRAQLDESRQALEDAQTNNNLEKAAELQYGTIPQLEKELRELEDNFQDEQGEDTDRMIREVVTDEEIGDIVSQWTGIPVSKLVETEREKLLHLSDILHKRVVGQDKAVDLVSDAVVRARAGIKDPNRPIGSFLFLGPTGVGKTELAKSLAASLFDSEKHMIRIDMSEYMEKHAVSRLIGAPPGYIGHDEGGQLTEAVRRNPYSVILLDEVEKAHTDVFNVLLQILDEGRLTDSKGRSVDFKNTIIIMTSNIGSQVLLENVKETGEITESTEKAVMTSLNAYFKPEILNRMDDIVLFKPLSIDDMSMIVDKILTQLNIRLLEQRISIEVSDDAKAWLGQEAYEPQYGARPLKRFVQRQIETPLARMMIKEGFPEGTTIKVNLNSDNNLTFNVEKIHE</sequence>